<keyword id="KW-0012">Acyltransferase</keyword>
<keyword id="KW-0489">Methyltransferase</keyword>
<keyword id="KW-0511">Multifunctional enzyme</keyword>
<keyword id="KW-0521">NADP</keyword>
<keyword id="KW-0560">Oxidoreductase</keyword>
<keyword id="KW-0596">Phosphopantetheine</keyword>
<keyword id="KW-0597">Phosphoprotein</keyword>
<keyword id="KW-1185">Reference proteome</keyword>
<keyword id="KW-0808">Transferase</keyword>
<gene>
    <name evidence="8" type="primary">sor1</name>
    <name type="ORF">TRIREDRAFT_73618</name>
</gene>
<sequence length="2567" mass="277294">MGSLGPDSQSRWASEPIAIIGMSSKFAGDATNTDKLWQMLAEGRSGWTEFPASRFRSEGVYHPNNERLNTTHVKGAHFLQEDVGLFDAAFFSYSSETASSLDPQYRLQLESAYEALENAGIPLTQIAGSNTSVFTGVFVHDYRDALLRDADNLPRLMATGTGVPMMSNRISHFFDLRGASMTIETACSSGMVATHQGIQSLRTGEADMSIVGGANLTLNPDMFKALGSAGFLSADGKSYAFDSRASGYGRGEGVATIVMKRLSDALAAGDPIRAVIRSSLLNQDGKTETITTPSLEAQIDLIRQCYARAGLDPRDTQYFEAHGTGTQAGDTVEARAIATVFSHNQDPLLIGSIKTNIGHTEAASGLASIIKTALALEKGVIPASINFEKPNPKLSLEDWHLKLVRQLQEWPAASTRRASINNFGYGGANAHIILEDGASWTPSPVEGTSSKEPIDTGSRVLVLSGKDEQACRTMISNLAEYLQRVASAEDEPSRLLDSLAYTLGQRRTRFPWVAAHPVPVTEGIGAVVNTLQSPKFKPYRSSRRPRIGMVFTGQGAQWWAMGRELRDAYPVYKASLDEADAYIRQFGADWSLVEELSRDAASSRINESGLSTPICVAVQISLVRLLESWGVVPAAVTSHSSGEIAAAYTVGALSYKDAMAYAYHRAVLAADTSLRGPVKGGMLAIGLGREDTEAYLKRLTTGGKAMVACVNSPSSTTVSGDLSAVQELEELANADGVFARLLKVETAWHSHHMTAIANVYVEALDNIKRKNSRNESSIAYSSPVTGGRVANIEEVARPEHWVKSLVQPVQFVDAFTDMVLGNPNGSANVDVVVEVGPHTALGGPIQQILALPAFKGLQIPYYGCLVRKADAKDTMQALAANLLQQGYPLDMDAVNFPHGRGSRVRVLTGLPSYPWNHQVKHWVEPRFNRALRERSVPPHHLLGSLVEGTNLEEPTWRHTLRISESPWTRDHAIQSNVVYPAAGYICLAIEATKQLHALNHTKAGAKEVSGYRLRDVDFLQALMIPDTSDGIEIQTSLRPVNDKDVAIQGWKHFEVWTVTGDNRWTQHAKGLISIEFEASAQVYEPKLGEFTIKGYKRQIPPAQLFANLKALGIGHGPVFQNMSHIVQSGFDRRSVVLTTVPDTSVPNDLPREHVLHPVTLDSFITSPYSAVPGAAGRETAAKVPRSVKSFWVSSNISHSPEHVFKAHSHIIRDDKHGMEADVIVANDGVDDNNVLLEMKGFSYQSLGRSVSLQHTEPWESQLCSSIHWRPDISIKLPATVSLVKQELSSNSNSAEAGGVEISSLCLYFIQKALASLSDSDFTNGSHYSKYYAWMKSAAQQAAITDIDEEHIDQIAKAQADGEMIRLLGKQLVSILRGQSTPTEIMEQDKNLLSRFYSETPRAKRTSSQLSGLLRHLVHKNPRARILEIGASTGGITGSALGVLDTATSGGPHASLYHYTDLSDRNFDAAREGFAAWSDILAFDVLDIERDPADQGFTVGSYDVVIASHAFSSTSSAIAGVLENVRSLLKPGGTLLFTEDFKPSIDVQFVKGLFPSWWSSERFSEQHVEPSPLLSVPLWDRSLRHAGFTGIDIELRDSDDVDASVSATIMSTLPPHPAGQSDIDAGKVVIVTSEQAGIPPSEWLKALQHSIASYSKAVNGAEGKVLPSVQSIESAAATAAWYADKICIFIGEINEPILYNLDAASLEGIKAMSTGCKGLLWVTRGGAVDCERPEVSLATGFVRTLRNEYVGRKFITLDLSPKGSLWQESGHEAIAQVLQNAFGQSLPGHSSGPDKGPVELEYAERDGVILIPRVYHDVAKDNAITPKTLESEEDTQGITTVEPFYQQHRPLCFLPELLVFGDDASAAVYRDTLPPRLVEIMPRAYGAGLNPADRTITGQECSGIITRVGIEASKHGYSVGDRVVCLLQQSSFTSRAVVDWTSVVQMPSRLSFQQAASLPAAFLVAYFSLVETARLKTSQSVLIHNAAGSIGQAAIMVAKHIGATVFTTVASPKQRDLLTREHGIPSHQIFDSNNASFGTAVTAATNGRGVDVVLNSLTGPLLQTSFNLVAPLGHFIEVGKYDSLANSNLEMLPFTRGVSFSAVDVPSLLQHRGSDVHRCLEEVMRLFELEALAPVSPVIEHNIGDIAQVSRLIQTEEETGKRVLSVAQDEMVSVLPHTAPAATLSPDASYLIVGGNGGLGQAVAHWMVSRGAKNLVLLSRSAGQSPKMAVLAEELRDAGCHRVLPVSCDVAKEDDLARAMDTCAREGLPPIRGVVHAAFVLHDSFVENMTLDDYKYTIQSKVSGAWNLHNQFNLPGDLDFFVLFSSINGILGYASQAAYSAAGAYEDALAHWRVKHKGLPAVSIDLSLVDGVGYVAEASAAEAMRKSLIKAGRRVINEEQVLASLELAIVSPYDPQFILGGINSGPGPHWDVDGDLGRDMRLLALKYRQPAAADGHDDEDSKAANGGDSLSAKIASASSRDEAISVVGSAVAAMLADMFLVSVEEVDLNDSPSQQGIDSLVAVEVRNMLFSQAGAELSIFNIMQSPSLAQLVANVVDRSTFAKFAKSS</sequence>
<dbReference type="EC" id="2.3.1.-" evidence="7"/>
<dbReference type="EMBL" id="GL985056">
    <property type="protein sequence ID" value="EGR52690.1"/>
    <property type="molecule type" value="Genomic_DNA"/>
</dbReference>
<dbReference type="RefSeq" id="XP_006961561.1">
    <property type="nucleotide sequence ID" value="XM_006961499.1"/>
</dbReference>
<dbReference type="SMR" id="G0R6S8"/>
<dbReference type="STRING" id="431241.G0R6S8"/>
<dbReference type="EnsemblFungi" id="EGR52690">
    <property type="protein sequence ID" value="EGR52690"/>
    <property type="gene ID" value="TRIREDRAFT_73618"/>
</dbReference>
<dbReference type="GeneID" id="18488219"/>
<dbReference type="KEGG" id="tre:TRIREDRAFT_73618"/>
<dbReference type="VEuPathDB" id="FungiDB:TRIREDRAFT_73618"/>
<dbReference type="eggNOG" id="KOG1202">
    <property type="taxonomic scope" value="Eukaryota"/>
</dbReference>
<dbReference type="HOGENOM" id="CLU_000022_31_0_1"/>
<dbReference type="OrthoDB" id="329835at2759"/>
<dbReference type="Proteomes" id="UP000008984">
    <property type="component" value="Unassembled WGS sequence"/>
</dbReference>
<dbReference type="GO" id="GO:0004312">
    <property type="term" value="F:fatty acid synthase activity"/>
    <property type="evidence" value="ECO:0007669"/>
    <property type="project" value="TreeGrafter"/>
</dbReference>
<dbReference type="GO" id="GO:0008168">
    <property type="term" value="F:methyltransferase activity"/>
    <property type="evidence" value="ECO:0007669"/>
    <property type="project" value="UniProtKB-KW"/>
</dbReference>
<dbReference type="GO" id="GO:0016491">
    <property type="term" value="F:oxidoreductase activity"/>
    <property type="evidence" value="ECO:0007669"/>
    <property type="project" value="UniProtKB-KW"/>
</dbReference>
<dbReference type="GO" id="GO:0031177">
    <property type="term" value="F:phosphopantetheine binding"/>
    <property type="evidence" value="ECO:0007669"/>
    <property type="project" value="InterPro"/>
</dbReference>
<dbReference type="GO" id="GO:0006633">
    <property type="term" value="P:fatty acid biosynthetic process"/>
    <property type="evidence" value="ECO:0007669"/>
    <property type="project" value="TreeGrafter"/>
</dbReference>
<dbReference type="GO" id="GO:0032259">
    <property type="term" value="P:methylation"/>
    <property type="evidence" value="ECO:0007669"/>
    <property type="project" value="UniProtKB-KW"/>
</dbReference>
<dbReference type="GO" id="GO:0044550">
    <property type="term" value="P:secondary metabolite biosynthetic process"/>
    <property type="evidence" value="ECO:0007669"/>
    <property type="project" value="TreeGrafter"/>
</dbReference>
<dbReference type="CDD" id="cd02440">
    <property type="entry name" value="AdoMet_MTases"/>
    <property type="match status" value="1"/>
</dbReference>
<dbReference type="CDD" id="cd05195">
    <property type="entry name" value="enoyl_red"/>
    <property type="match status" value="1"/>
</dbReference>
<dbReference type="CDD" id="cd00833">
    <property type="entry name" value="PKS"/>
    <property type="match status" value="1"/>
</dbReference>
<dbReference type="FunFam" id="3.40.366.10:FF:000002">
    <property type="entry name" value="Probable polyketide synthase 2"/>
    <property type="match status" value="1"/>
</dbReference>
<dbReference type="Gene3D" id="3.30.70.3290">
    <property type="match status" value="1"/>
</dbReference>
<dbReference type="Gene3D" id="3.40.47.10">
    <property type="match status" value="1"/>
</dbReference>
<dbReference type="Gene3D" id="1.10.1200.10">
    <property type="entry name" value="ACP-like"/>
    <property type="match status" value="1"/>
</dbReference>
<dbReference type="Gene3D" id="3.40.366.10">
    <property type="entry name" value="Malonyl-Coenzyme A Acyl Carrier Protein, domain 2"/>
    <property type="match status" value="1"/>
</dbReference>
<dbReference type="Gene3D" id="3.90.180.10">
    <property type="entry name" value="Medium-chain alcohol dehydrogenases, catalytic domain"/>
    <property type="match status" value="1"/>
</dbReference>
<dbReference type="Gene3D" id="3.40.50.720">
    <property type="entry name" value="NAD(P)-binding Rossmann-like Domain"/>
    <property type="match status" value="1"/>
</dbReference>
<dbReference type="Gene3D" id="3.10.129.110">
    <property type="entry name" value="Polyketide synthase dehydratase"/>
    <property type="match status" value="1"/>
</dbReference>
<dbReference type="Gene3D" id="3.40.50.150">
    <property type="entry name" value="Vaccinia Virus protein VP39"/>
    <property type="match status" value="1"/>
</dbReference>
<dbReference type="InterPro" id="IPR001227">
    <property type="entry name" value="Ac_transferase_dom_sf"/>
</dbReference>
<dbReference type="InterPro" id="IPR036736">
    <property type="entry name" value="ACP-like_sf"/>
</dbReference>
<dbReference type="InterPro" id="IPR014043">
    <property type="entry name" value="Acyl_transferase_dom"/>
</dbReference>
<dbReference type="InterPro" id="IPR016035">
    <property type="entry name" value="Acyl_Trfase/lysoPLipase"/>
</dbReference>
<dbReference type="InterPro" id="IPR013149">
    <property type="entry name" value="ADH-like_C"/>
</dbReference>
<dbReference type="InterPro" id="IPR011032">
    <property type="entry name" value="GroES-like_sf"/>
</dbReference>
<dbReference type="InterPro" id="IPR014031">
    <property type="entry name" value="Ketoacyl_synth_C"/>
</dbReference>
<dbReference type="InterPro" id="IPR014030">
    <property type="entry name" value="Ketoacyl_synth_N"/>
</dbReference>
<dbReference type="InterPro" id="IPR016036">
    <property type="entry name" value="Malonyl_transacylase_ACP-bd"/>
</dbReference>
<dbReference type="InterPro" id="IPR013217">
    <property type="entry name" value="Methyltransf_12"/>
</dbReference>
<dbReference type="InterPro" id="IPR036291">
    <property type="entry name" value="NAD(P)-bd_dom_sf"/>
</dbReference>
<dbReference type="InterPro" id="IPR056501">
    <property type="entry name" value="NAD-bd_HRPKS_sdrA"/>
</dbReference>
<dbReference type="InterPro" id="IPR032821">
    <property type="entry name" value="PKS_assoc"/>
</dbReference>
<dbReference type="InterPro" id="IPR020841">
    <property type="entry name" value="PKS_Beta-ketoAc_synthase_dom"/>
</dbReference>
<dbReference type="InterPro" id="IPR042104">
    <property type="entry name" value="PKS_dehydratase_sf"/>
</dbReference>
<dbReference type="InterPro" id="IPR020807">
    <property type="entry name" value="PKS_DH"/>
</dbReference>
<dbReference type="InterPro" id="IPR049551">
    <property type="entry name" value="PKS_DH_C"/>
</dbReference>
<dbReference type="InterPro" id="IPR049552">
    <property type="entry name" value="PKS_DH_N"/>
</dbReference>
<dbReference type="InterPro" id="IPR020843">
    <property type="entry name" value="PKS_ER"/>
</dbReference>
<dbReference type="InterPro" id="IPR013968">
    <property type="entry name" value="PKS_KR"/>
</dbReference>
<dbReference type="InterPro" id="IPR049900">
    <property type="entry name" value="PKS_mFAS_DH"/>
</dbReference>
<dbReference type="InterPro" id="IPR050091">
    <property type="entry name" value="PKS_NRPS_Biosynth_Enz"/>
</dbReference>
<dbReference type="InterPro" id="IPR020806">
    <property type="entry name" value="PKS_PP-bd"/>
</dbReference>
<dbReference type="InterPro" id="IPR009081">
    <property type="entry name" value="PP-bd_ACP"/>
</dbReference>
<dbReference type="InterPro" id="IPR029063">
    <property type="entry name" value="SAM-dependent_MTases_sf"/>
</dbReference>
<dbReference type="InterPro" id="IPR016039">
    <property type="entry name" value="Thiolase-like"/>
</dbReference>
<dbReference type="PANTHER" id="PTHR43775:SF29">
    <property type="entry name" value="ASPERFURANONE POLYKETIDE SYNTHASE AFOG-RELATED"/>
    <property type="match status" value="1"/>
</dbReference>
<dbReference type="PANTHER" id="PTHR43775">
    <property type="entry name" value="FATTY ACID SYNTHASE"/>
    <property type="match status" value="1"/>
</dbReference>
<dbReference type="Pfam" id="PF00698">
    <property type="entry name" value="Acyl_transf_1"/>
    <property type="match status" value="1"/>
</dbReference>
<dbReference type="Pfam" id="PF00107">
    <property type="entry name" value="ADH_zinc_N"/>
    <property type="match status" value="1"/>
</dbReference>
<dbReference type="Pfam" id="PF16197">
    <property type="entry name" value="KAsynt_C_assoc"/>
    <property type="match status" value="1"/>
</dbReference>
<dbReference type="Pfam" id="PF00109">
    <property type="entry name" value="ketoacyl-synt"/>
    <property type="match status" value="1"/>
</dbReference>
<dbReference type="Pfam" id="PF02801">
    <property type="entry name" value="Ketoacyl-synt_C"/>
    <property type="match status" value="1"/>
</dbReference>
<dbReference type="Pfam" id="PF08659">
    <property type="entry name" value="KR"/>
    <property type="match status" value="1"/>
</dbReference>
<dbReference type="Pfam" id="PF08242">
    <property type="entry name" value="Methyltransf_12"/>
    <property type="match status" value="1"/>
</dbReference>
<dbReference type="Pfam" id="PF23114">
    <property type="entry name" value="NAD-bd_HRPKS_sdrA"/>
    <property type="match status" value="1"/>
</dbReference>
<dbReference type="Pfam" id="PF21089">
    <property type="entry name" value="PKS_DH_N"/>
    <property type="match status" value="1"/>
</dbReference>
<dbReference type="Pfam" id="PF00550">
    <property type="entry name" value="PP-binding"/>
    <property type="match status" value="1"/>
</dbReference>
<dbReference type="Pfam" id="PF14765">
    <property type="entry name" value="PS-DH"/>
    <property type="match status" value="1"/>
</dbReference>
<dbReference type="SMART" id="SM00827">
    <property type="entry name" value="PKS_AT"/>
    <property type="match status" value="1"/>
</dbReference>
<dbReference type="SMART" id="SM00826">
    <property type="entry name" value="PKS_DH"/>
    <property type="match status" value="1"/>
</dbReference>
<dbReference type="SMART" id="SM00829">
    <property type="entry name" value="PKS_ER"/>
    <property type="match status" value="1"/>
</dbReference>
<dbReference type="SMART" id="SM00822">
    <property type="entry name" value="PKS_KR"/>
    <property type="match status" value="1"/>
</dbReference>
<dbReference type="SMART" id="SM00825">
    <property type="entry name" value="PKS_KS"/>
    <property type="match status" value="1"/>
</dbReference>
<dbReference type="SMART" id="SM00823">
    <property type="entry name" value="PKS_PP"/>
    <property type="match status" value="1"/>
</dbReference>
<dbReference type="SUPFAM" id="SSF47336">
    <property type="entry name" value="ACP-like"/>
    <property type="match status" value="1"/>
</dbReference>
<dbReference type="SUPFAM" id="SSF52151">
    <property type="entry name" value="FabD/lysophospholipase-like"/>
    <property type="match status" value="1"/>
</dbReference>
<dbReference type="SUPFAM" id="SSF50129">
    <property type="entry name" value="GroES-like"/>
    <property type="match status" value="1"/>
</dbReference>
<dbReference type="SUPFAM" id="SSF51735">
    <property type="entry name" value="NAD(P)-binding Rossmann-fold domains"/>
    <property type="match status" value="2"/>
</dbReference>
<dbReference type="SUPFAM" id="SSF55048">
    <property type="entry name" value="Probable ACP-binding domain of malonyl-CoA ACP transacylase"/>
    <property type="match status" value="1"/>
</dbReference>
<dbReference type="SUPFAM" id="SSF53335">
    <property type="entry name" value="S-adenosyl-L-methionine-dependent methyltransferases"/>
    <property type="match status" value="1"/>
</dbReference>
<dbReference type="SUPFAM" id="SSF53901">
    <property type="entry name" value="Thiolase-like"/>
    <property type="match status" value="1"/>
</dbReference>
<dbReference type="PROSITE" id="PS50075">
    <property type="entry name" value="CARRIER"/>
    <property type="match status" value="1"/>
</dbReference>
<dbReference type="PROSITE" id="PS52004">
    <property type="entry name" value="KS3_2"/>
    <property type="match status" value="1"/>
</dbReference>
<dbReference type="PROSITE" id="PS52019">
    <property type="entry name" value="PKS_MFAS_DH"/>
    <property type="match status" value="1"/>
</dbReference>
<accession>G0R6S8</accession>
<feature type="chain" id="PRO_0000443835" description="Highly reducing polyketide synthase sor1">
    <location>
        <begin position="1"/>
        <end position="2567"/>
    </location>
</feature>
<feature type="domain" description="Ketosynthase family 3 (KS3)" evidence="4">
    <location>
        <begin position="14"/>
        <end position="436"/>
    </location>
</feature>
<feature type="domain" description="PKS/mFAS DH" evidence="5">
    <location>
        <begin position="939"/>
        <end position="1252"/>
    </location>
</feature>
<feature type="domain" description="Carrier" evidence="3">
    <location>
        <begin position="2481"/>
        <end position="2558"/>
    </location>
</feature>
<feature type="region of interest" description="Malonyl-CoA:ACP transacylase (MAT) domain" evidence="2">
    <location>
        <begin position="550"/>
        <end position="841"/>
    </location>
</feature>
<feature type="region of interest" description="Dehydratase (DH) domain" evidence="2">
    <location>
        <begin position="939"/>
        <end position="1249"/>
    </location>
</feature>
<feature type="region of interest" description="N-terminal hotdog fold" evidence="5">
    <location>
        <begin position="939"/>
        <end position="1079"/>
    </location>
</feature>
<feature type="region of interest" description="C-terminal hotdog fold" evidence="5">
    <location>
        <begin position="1095"/>
        <end position="1252"/>
    </location>
</feature>
<feature type="region of interest" description="Methyltransferase (CMet) domain" evidence="2">
    <location>
        <begin position="1426"/>
        <end position="1534"/>
    </location>
</feature>
<feature type="region of interest" description="Enoyl reductase (ER) domain" evidence="2">
    <location>
        <begin position="1852"/>
        <end position="2163"/>
    </location>
</feature>
<feature type="region of interest" description="Ketoreductase (KR) domain" evidence="2">
    <location>
        <begin position="2187"/>
        <end position="2369"/>
    </location>
</feature>
<feature type="active site" description="For beta-ketoacyl synthase activity" evidence="4">
    <location>
        <position position="187"/>
    </location>
</feature>
<feature type="active site" description="For beta-ketoacyl synthase activity" evidence="4">
    <location>
        <position position="322"/>
    </location>
</feature>
<feature type="active site" description="For beta-ketoacyl synthase activity" evidence="4">
    <location>
        <position position="359"/>
    </location>
</feature>
<feature type="active site" description="Proton acceptor; for dehydratase activity" evidence="5">
    <location>
        <position position="971"/>
    </location>
</feature>
<feature type="active site" description="Proton donor; for dehydratase activity" evidence="5">
    <location>
        <position position="1161"/>
    </location>
</feature>
<feature type="modified residue" description="O-(pantetheine 4'-phosphoryl)serine" evidence="3">
    <location>
        <position position="2518"/>
    </location>
</feature>
<name>SORA_HYPJQ</name>
<reference key="1">
    <citation type="journal article" date="2008" name="Nat. Biotechnol.">
        <title>Genome sequencing and analysis of the biomass-degrading fungus Trichoderma reesei (syn. Hypocrea jecorina).</title>
        <authorList>
            <person name="Martinez D."/>
            <person name="Berka R.M."/>
            <person name="Henrissat B."/>
            <person name="Saloheimo M."/>
            <person name="Arvas M."/>
            <person name="Baker S.E."/>
            <person name="Chapman J."/>
            <person name="Chertkov O."/>
            <person name="Coutinho P.M."/>
            <person name="Cullen D."/>
            <person name="Danchin E.G."/>
            <person name="Grigoriev I.V."/>
            <person name="Harris P."/>
            <person name="Jackson M."/>
            <person name="Kubicek C.P."/>
            <person name="Han C.S."/>
            <person name="Ho I."/>
            <person name="Larrondo L.F."/>
            <person name="de Leon A.L."/>
            <person name="Magnuson J.K."/>
            <person name="Merino S."/>
            <person name="Misra M."/>
            <person name="Nelson B."/>
            <person name="Putnam N."/>
            <person name="Robbertse B."/>
            <person name="Salamov A.A."/>
            <person name="Schmoll M."/>
            <person name="Terry A."/>
            <person name="Thayer N."/>
            <person name="Westerholm-Parvinen A."/>
            <person name="Schoch C.L."/>
            <person name="Yao J."/>
            <person name="Barabote R."/>
            <person name="Nelson M.A."/>
            <person name="Detter C."/>
            <person name="Bruce D."/>
            <person name="Kuske C.R."/>
            <person name="Xie G."/>
            <person name="Richardson P."/>
            <person name="Rokhsar D.S."/>
            <person name="Lucas S.M."/>
            <person name="Rubin E.M."/>
            <person name="Dunn-Coleman N."/>
            <person name="Ward M."/>
            <person name="Brettin T.S."/>
        </authorList>
    </citation>
    <scope>NUCLEOTIDE SEQUENCE [LARGE SCALE GENOMIC DNA]</scope>
    <source>
        <strain>QM6a</strain>
    </source>
</reference>
<reference key="2">
    <citation type="journal article" date="2016" name="BMC Evol. Biol.">
        <title>Several steps of lateral gene transfer followed by events of 'birth-and-death' evolution shaped a fungal sorbicillinoid biosynthetic gene cluster.</title>
        <authorList>
            <person name="Druzhinina I.S."/>
            <person name="Kubicek E.M."/>
            <person name="Kubicek C.P."/>
        </authorList>
    </citation>
    <scope>IDENTIFICATION</scope>
</reference>
<reference key="3">
    <citation type="journal article" date="2017" name="Front. Microbiol.">
        <title>In vivo study of the sorbicillinoid gene cluster in Trichoderma reesei.</title>
        <authorList>
            <person name="Derntl C."/>
            <person name="Guzman-Chavez F."/>
            <person name="Mello-de-Sousa T.M."/>
            <person name="Busse H.J."/>
            <person name="Driessen A.J.M."/>
            <person name="Mach R.L."/>
            <person name="Mach-Aigner A.R."/>
        </authorList>
    </citation>
    <scope>FUNCTION</scope>
    <scope>DISRUPTION PHENOTYPE</scope>
</reference>
<reference key="4">
    <citation type="journal article" date="2017" name="PLoS ONE">
        <title>A CRE1-regulated cluster is responsible for light dependent production of dihydrotrichotetronin in Trichoderma reesei.</title>
        <authorList>
            <person name="Monroy A.A."/>
            <person name="Stappler E."/>
            <person name="Schuster A."/>
            <person name="Sulyok M."/>
            <person name="Schmoll M."/>
        </authorList>
    </citation>
    <scope>FUNCTION</scope>
    <scope>INDUCTION</scope>
    <scope>DISRUPTION PHENOTYPE</scope>
    <scope>PATHWAY</scope>
</reference>
<comment type="function">
    <text evidence="1 6 7">Highly reducing polyketide synthase; part of the SOR gene cluster that mediates the biosynthesis of sorbicillinoids, a diverse group of yellow secondary metabolites that restrict growth of competing pathogenic fungi but not of bacteria (PubMed:29104566). Sorbicillinoids biosynthesis requires the action of two PKSs (PubMed:28809958). The SOR cluster is required for the production of trichodimerol and dihydrotrichotetronin, with sor2 being sufficient for production of trichodimerol, but not dihydrotrichotetronin in the light (PubMed:28809958). Sor1 iteratively combines three acetyl units and the growing chain is modified by the ketoacyl reductase subunit, and optional by the enoyl reductase subunit in the second cycle (By similarity). The polyketide is then handed over to the PKS sor2, which adds three more acetyl units, and two methyl groups (By similarity). Sor2 releases an aldehyde, which undergoes spontaneous cyclization resulting in the formation of sorbicillin or 2',3'-dihydrosorbicillin (By similarity). The monooxygenase sor5 oxidizes sorbicillin and 2',3'-dihydrosorbicillin to 2',3'-dihydrosorbicillinol and sorbicillinol, respectively (PubMed:29104566). The oxidoreductase sor8 further converts sorbicillinol into oxosorbicillinol (PubMed:29104566). Sorbicillinol is the building block for the other sorbicillinoids such as disorbicillinol, bisvertinolon, dihydrobisvertinolone, and dihydrotrichotetronine (PubMed:28809958, PubMed:29104566).</text>
</comment>
<comment type="pathway">
    <text evidence="6">Secondary metabolite biosynthesis.</text>
</comment>
<comment type="induction">
    <text evidence="6">The promoter contains putative CRE1 binding motifs 5'-SYGGRG-3' and expression is differentially regulated in light and darkness by CRE1 (PubMed:28809958). Photoreceptors BLR1 and BLR2 negatively regulate the expression, while ENV1 exerts positive regulation (PubMed:28809958). Moreover the SOR biosynthetic genes show a mechanism of positive feedback on each other in darkness (PubMed:28809958).</text>
</comment>
<comment type="disruption phenotype">
    <text evidence="6 7">Impairs the production of sorbicillinol (PubMed:29104566). Abolishes production of trichodimerol and dihydrotrichotetronin in darkness, while trichodimerol stays still detectable in light (PubMed:28809958). Also impacts production of paracelsin in a light dependent manner, with decreased paracelsin levels in light, but likely in an indirect way (PubMed:28809958).</text>
</comment>
<evidence type="ECO:0000250" key="1">
    <source>
        <dbReference type="UniProtKB" id="B6HNK3"/>
    </source>
</evidence>
<evidence type="ECO:0000255" key="2"/>
<evidence type="ECO:0000255" key="3">
    <source>
        <dbReference type="PROSITE-ProRule" id="PRU00258"/>
    </source>
</evidence>
<evidence type="ECO:0000255" key="4">
    <source>
        <dbReference type="PROSITE-ProRule" id="PRU01348"/>
    </source>
</evidence>
<evidence type="ECO:0000255" key="5">
    <source>
        <dbReference type="PROSITE-ProRule" id="PRU01363"/>
    </source>
</evidence>
<evidence type="ECO:0000269" key="6">
    <source>
    </source>
</evidence>
<evidence type="ECO:0000269" key="7">
    <source>
    </source>
</evidence>
<evidence type="ECO:0000303" key="8">
    <source>
    </source>
</evidence>
<evidence type="ECO:0000305" key="9"/>
<proteinExistence type="evidence at transcript level"/>
<protein>
    <recommendedName>
        <fullName evidence="8">Highly reducing polyketide synthase sor1</fullName>
        <shortName evidence="9">HR-PKS sor1</shortName>
        <ecNumber evidence="7">2.3.1.-</ecNumber>
    </recommendedName>
    <alternativeName>
        <fullName evidence="8">Sorbicillinoid biosynthetic cluster protein 1</fullName>
    </alternativeName>
</protein>
<organism>
    <name type="scientific">Hypocrea jecorina (strain QM6a)</name>
    <name type="common">Trichoderma reesei</name>
    <dbReference type="NCBI Taxonomy" id="431241"/>
    <lineage>
        <taxon>Eukaryota</taxon>
        <taxon>Fungi</taxon>
        <taxon>Dikarya</taxon>
        <taxon>Ascomycota</taxon>
        <taxon>Pezizomycotina</taxon>
        <taxon>Sordariomycetes</taxon>
        <taxon>Hypocreomycetidae</taxon>
        <taxon>Hypocreales</taxon>
        <taxon>Hypocreaceae</taxon>
        <taxon>Trichoderma</taxon>
    </lineage>
</organism>